<keyword id="KW-0028">Amino-acid biosynthesis</keyword>
<keyword id="KW-0413">Isomerase</keyword>
<keyword id="KW-0486">Methionine biosynthesis</keyword>
<keyword id="KW-0614">Plasmid</keyword>
<keyword id="KW-1185">Reference proteome</keyword>
<comment type="function">
    <text evidence="1">Catalyzes the interconversion of methylthioribose-1-phosphate (MTR-1-P) into methylthioribulose-1-phosphate (MTRu-1-P).</text>
</comment>
<comment type="catalytic activity">
    <reaction evidence="1">
        <text>5-(methylsulfanyl)-alpha-D-ribose 1-phosphate = 5-(methylsulfanyl)-D-ribulose 1-phosphate</text>
        <dbReference type="Rhea" id="RHEA:19989"/>
        <dbReference type="ChEBI" id="CHEBI:58533"/>
        <dbReference type="ChEBI" id="CHEBI:58548"/>
        <dbReference type="EC" id="5.3.1.23"/>
    </reaction>
</comment>
<comment type="pathway">
    <text evidence="1">Amino-acid biosynthesis; L-methionine biosynthesis via salvage pathway; L-methionine from S-methyl-5-thio-alpha-D-ribose 1-phosphate: step 1/6.</text>
</comment>
<comment type="similarity">
    <text evidence="2">Belongs to the eIF-2B alpha/beta/delta subunits family. MtnA subfamily.</text>
</comment>
<protein>
    <recommendedName>
        <fullName evidence="1">Methylthioribose-1-phosphate isomerase</fullName>
        <shortName evidence="1">M1Pi</shortName>
        <shortName evidence="1">MTR-1-P isomerase</shortName>
        <ecNumber evidence="1">5.3.1.23</ecNumber>
    </recommendedName>
    <alternativeName>
        <fullName evidence="1">S-methyl-5-thioribose-1-phosphate isomerase</fullName>
    </alternativeName>
</protein>
<accession>Q92TI2</accession>
<proteinExistence type="inferred from homology"/>
<sequence length="364" mass="39656">MKVGDRHYHTIWLNEDGRSVDIIDQRWLPHDLRVVTLKTVADVALAIRDMWVRGAPLIGVTAAYGVAIAMTKDPSDAHLDAVWDELHQTRPTAINLRWALDAMRDHLRPLPEAGRADAAYQRATEIAEEDIELNRAIGANGLKVIRQIAAKKKPGEPVRILTHCNAGWLATVDYGTATAPIYMAVEEGIPVHVYVDETRPRNQGAYLTAWEMSSHGVPHTLIVDNAGGHLMQHGDVDLVIVGTDRTTANGDVCNKIGTYLKALAARDNGVPFYVALPSPTIDWTVHDGVKEIPIEERPGDEVSFVQGRASDGSIASVRISPEGSPAANPAFDVTPARLITGLITERGIATPSPEGLKALFPERR</sequence>
<geneLocation type="plasmid">
    <name>pSymB</name>
    <name>megaplasmid 2</name>
</geneLocation>
<dbReference type="EC" id="5.3.1.23" evidence="1"/>
<dbReference type="EMBL" id="AL591985">
    <property type="protein sequence ID" value="CAC49936.1"/>
    <property type="molecule type" value="Genomic_DNA"/>
</dbReference>
<dbReference type="PIR" id="H96033">
    <property type="entry name" value="H96033"/>
</dbReference>
<dbReference type="RefSeq" id="NP_438076.1">
    <property type="nucleotide sequence ID" value="NC_003078.1"/>
</dbReference>
<dbReference type="RefSeq" id="WP_003529406.1">
    <property type="nucleotide sequence ID" value="NC_003078.1"/>
</dbReference>
<dbReference type="SMR" id="Q92TI2"/>
<dbReference type="EnsemblBacteria" id="CAC49936">
    <property type="protein sequence ID" value="CAC49936"/>
    <property type="gene ID" value="SM_b20624"/>
</dbReference>
<dbReference type="GeneID" id="89577399"/>
<dbReference type="KEGG" id="sme:SM_b20624"/>
<dbReference type="PATRIC" id="fig|266834.11.peg.6462"/>
<dbReference type="eggNOG" id="COG0182">
    <property type="taxonomic scope" value="Bacteria"/>
</dbReference>
<dbReference type="HOGENOM" id="CLU_016218_1_2_5"/>
<dbReference type="OrthoDB" id="9803436at2"/>
<dbReference type="UniPathway" id="UPA00904">
    <property type="reaction ID" value="UER00874"/>
</dbReference>
<dbReference type="PRO" id="PR:Q92TI2"/>
<dbReference type="Proteomes" id="UP000001976">
    <property type="component" value="Plasmid pSymB"/>
</dbReference>
<dbReference type="GO" id="GO:0046523">
    <property type="term" value="F:S-methyl-5-thioribose-1-phosphate isomerase activity"/>
    <property type="evidence" value="ECO:0007669"/>
    <property type="project" value="UniProtKB-UniRule"/>
</dbReference>
<dbReference type="GO" id="GO:0019509">
    <property type="term" value="P:L-methionine salvage from methylthioadenosine"/>
    <property type="evidence" value="ECO:0007669"/>
    <property type="project" value="UniProtKB-UniRule"/>
</dbReference>
<dbReference type="FunFam" id="3.40.50.10470:FF:000006">
    <property type="entry name" value="Methylthioribose-1-phosphate isomerase"/>
    <property type="match status" value="1"/>
</dbReference>
<dbReference type="Gene3D" id="1.20.120.420">
    <property type="entry name" value="translation initiation factor eif-2b, domain 1"/>
    <property type="match status" value="1"/>
</dbReference>
<dbReference type="Gene3D" id="3.40.50.10470">
    <property type="entry name" value="Translation initiation factor eif-2b, domain 2"/>
    <property type="match status" value="1"/>
</dbReference>
<dbReference type="HAMAP" id="MF_01678">
    <property type="entry name" value="Salvage_MtnA"/>
    <property type="match status" value="1"/>
</dbReference>
<dbReference type="InterPro" id="IPR000649">
    <property type="entry name" value="IF-2B-related"/>
</dbReference>
<dbReference type="InterPro" id="IPR005251">
    <property type="entry name" value="IF-M1Pi"/>
</dbReference>
<dbReference type="InterPro" id="IPR042529">
    <property type="entry name" value="IF_2B-like_C"/>
</dbReference>
<dbReference type="InterPro" id="IPR011559">
    <property type="entry name" value="Initiation_fac_2B_a/b/d"/>
</dbReference>
<dbReference type="InterPro" id="IPR027363">
    <property type="entry name" value="M1Pi_N"/>
</dbReference>
<dbReference type="InterPro" id="IPR037171">
    <property type="entry name" value="NagB/RpiA_transferase-like"/>
</dbReference>
<dbReference type="NCBIfam" id="TIGR00524">
    <property type="entry name" value="eIF-2B_rel"/>
    <property type="match status" value="1"/>
</dbReference>
<dbReference type="NCBIfam" id="NF004326">
    <property type="entry name" value="PRK05720.1"/>
    <property type="match status" value="1"/>
</dbReference>
<dbReference type="NCBIfam" id="TIGR00512">
    <property type="entry name" value="salvage_mtnA"/>
    <property type="match status" value="1"/>
</dbReference>
<dbReference type="PANTHER" id="PTHR43475">
    <property type="entry name" value="METHYLTHIORIBOSE-1-PHOSPHATE ISOMERASE"/>
    <property type="match status" value="1"/>
</dbReference>
<dbReference type="PANTHER" id="PTHR43475:SF1">
    <property type="entry name" value="METHYLTHIORIBOSE-1-PHOSPHATE ISOMERASE"/>
    <property type="match status" value="1"/>
</dbReference>
<dbReference type="Pfam" id="PF01008">
    <property type="entry name" value="IF-2B"/>
    <property type="match status" value="1"/>
</dbReference>
<dbReference type="SUPFAM" id="SSF100950">
    <property type="entry name" value="NagB/RpiA/CoA transferase-like"/>
    <property type="match status" value="1"/>
</dbReference>
<feature type="chain" id="PRO_0000357232" description="Methylthioribose-1-phosphate isomerase">
    <location>
        <begin position="1"/>
        <end position="364"/>
    </location>
</feature>
<feature type="active site" description="Proton donor" evidence="1">
    <location>
        <position position="244"/>
    </location>
</feature>
<feature type="binding site" evidence="1">
    <location>
        <begin position="53"/>
        <end position="55"/>
    </location>
    <ligand>
        <name>substrate</name>
    </ligand>
</feature>
<feature type="binding site" evidence="1">
    <location>
        <position position="90"/>
    </location>
    <ligand>
        <name>substrate</name>
    </ligand>
</feature>
<feature type="binding site" evidence="1">
    <location>
        <position position="203"/>
    </location>
    <ligand>
        <name>substrate</name>
    </ligand>
</feature>
<feature type="binding site" evidence="1">
    <location>
        <begin position="254"/>
        <end position="255"/>
    </location>
    <ligand>
        <name>substrate</name>
    </ligand>
</feature>
<feature type="site" description="Transition state stabilizer" evidence="1">
    <location>
        <position position="164"/>
    </location>
</feature>
<reference key="1">
    <citation type="journal article" date="2001" name="Proc. Natl. Acad. Sci. U.S.A.">
        <title>The complete sequence of the 1,683-kb pSymB megaplasmid from the N2-fixing endosymbiont Sinorhizobium meliloti.</title>
        <authorList>
            <person name="Finan T.M."/>
            <person name="Weidner S."/>
            <person name="Wong K."/>
            <person name="Buhrmester J."/>
            <person name="Chain P."/>
            <person name="Vorhoelter F.J."/>
            <person name="Hernandez-Lucas I."/>
            <person name="Becker A."/>
            <person name="Cowie A."/>
            <person name="Gouzy J."/>
            <person name="Golding B."/>
            <person name="Puehler A."/>
        </authorList>
    </citation>
    <scope>NUCLEOTIDE SEQUENCE [LARGE SCALE GENOMIC DNA]</scope>
    <source>
        <strain>1021</strain>
    </source>
</reference>
<reference key="2">
    <citation type="journal article" date="2001" name="Science">
        <title>The composite genome of the legume symbiont Sinorhizobium meliloti.</title>
        <authorList>
            <person name="Galibert F."/>
            <person name="Finan T.M."/>
            <person name="Long S.R."/>
            <person name="Puehler A."/>
            <person name="Abola P."/>
            <person name="Ampe F."/>
            <person name="Barloy-Hubler F."/>
            <person name="Barnett M.J."/>
            <person name="Becker A."/>
            <person name="Boistard P."/>
            <person name="Bothe G."/>
            <person name="Boutry M."/>
            <person name="Bowser L."/>
            <person name="Buhrmester J."/>
            <person name="Cadieu E."/>
            <person name="Capela D."/>
            <person name="Chain P."/>
            <person name="Cowie A."/>
            <person name="Davis R.W."/>
            <person name="Dreano S."/>
            <person name="Federspiel N.A."/>
            <person name="Fisher R.F."/>
            <person name="Gloux S."/>
            <person name="Godrie T."/>
            <person name="Goffeau A."/>
            <person name="Golding B."/>
            <person name="Gouzy J."/>
            <person name="Gurjal M."/>
            <person name="Hernandez-Lucas I."/>
            <person name="Hong A."/>
            <person name="Huizar L."/>
            <person name="Hyman R.W."/>
            <person name="Jones T."/>
            <person name="Kahn D."/>
            <person name="Kahn M.L."/>
            <person name="Kalman S."/>
            <person name="Keating D.H."/>
            <person name="Kiss E."/>
            <person name="Komp C."/>
            <person name="Lelaure V."/>
            <person name="Masuy D."/>
            <person name="Palm C."/>
            <person name="Peck M.C."/>
            <person name="Pohl T.M."/>
            <person name="Portetelle D."/>
            <person name="Purnelle B."/>
            <person name="Ramsperger U."/>
            <person name="Surzycki R."/>
            <person name="Thebault P."/>
            <person name="Vandenbol M."/>
            <person name="Vorhoelter F.J."/>
            <person name="Weidner S."/>
            <person name="Wells D.H."/>
            <person name="Wong K."/>
            <person name="Yeh K.-C."/>
            <person name="Batut J."/>
        </authorList>
    </citation>
    <scope>NUCLEOTIDE SEQUENCE [LARGE SCALE GENOMIC DNA]</scope>
    <source>
        <strain>1021</strain>
    </source>
</reference>
<evidence type="ECO:0000255" key="1">
    <source>
        <dbReference type="HAMAP-Rule" id="MF_01678"/>
    </source>
</evidence>
<evidence type="ECO:0000305" key="2"/>
<name>MTNA_RHIME</name>
<gene>
    <name evidence="1" type="primary">mtnA</name>
    <name type="ordered locus">RB1537</name>
    <name type="ORF">SM_b20624</name>
    <name type="ORF">SMb20624</name>
</gene>
<organism>
    <name type="scientific">Rhizobium meliloti (strain 1021)</name>
    <name type="common">Ensifer meliloti</name>
    <name type="synonym">Sinorhizobium meliloti</name>
    <dbReference type="NCBI Taxonomy" id="266834"/>
    <lineage>
        <taxon>Bacteria</taxon>
        <taxon>Pseudomonadati</taxon>
        <taxon>Pseudomonadota</taxon>
        <taxon>Alphaproteobacteria</taxon>
        <taxon>Hyphomicrobiales</taxon>
        <taxon>Rhizobiaceae</taxon>
        <taxon>Sinorhizobium/Ensifer group</taxon>
        <taxon>Sinorhizobium</taxon>
    </lineage>
</organism>